<protein>
    <recommendedName>
        <fullName evidence="1">Probable D-serine dehydratase</fullName>
        <ecNumber evidence="1">4.3.1.18</ecNumber>
    </recommendedName>
    <alternativeName>
        <fullName evidence="1">D-serine deaminase</fullName>
        <shortName evidence="1">DSD</shortName>
    </alternativeName>
</protein>
<comment type="catalytic activity">
    <reaction evidence="1">
        <text>D-serine = pyruvate + NH4(+)</text>
        <dbReference type="Rhea" id="RHEA:13977"/>
        <dbReference type="ChEBI" id="CHEBI:15361"/>
        <dbReference type="ChEBI" id="CHEBI:28938"/>
        <dbReference type="ChEBI" id="CHEBI:35247"/>
        <dbReference type="EC" id="4.3.1.18"/>
    </reaction>
</comment>
<comment type="cofactor">
    <cofactor evidence="1">
        <name>pyridoxal 5'-phosphate</name>
        <dbReference type="ChEBI" id="CHEBI:597326"/>
    </cofactor>
</comment>
<comment type="similarity">
    <text evidence="1">Belongs to the serine/threonine dehydratase family. DsdA subfamily.</text>
</comment>
<accession>B3PYT5</accession>
<name>SDHD_RHIE6</name>
<evidence type="ECO:0000255" key="1">
    <source>
        <dbReference type="HAMAP-Rule" id="MF_01030"/>
    </source>
</evidence>
<keyword id="KW-0456">Lyase</keyword>
<keyword id="KW-0663">Pyridoxal phosphate</keyword>
<organism>
    <name type="scientific">Rhizobium etli (strain CIAT 652)</name>
    <dbReference type="NCBI Taxonomy" id="491916"/>
    <lineage>
        <taxon>Bacteria</taxon>
        <taxon>Pseudomonadati</taxon>
        <taxon>Pseudomonadota</taxon>
        <taxon>Alphaproteobacteria</taxon>
        <taxon>Hyphomicrobiales</taxon>
        <taxon>Rhizobiaceae</taxon>
        <taxon>Rhizobium/Agrobacterium group</taxon>
        <taxon>Rhizobium</taxon>
    </lineage>
</organism>
<gene>
    <name evidence="1" type="primary">dsdA</name>
    <name type="ordered locus">RHECIAT_CH0002054</name>
</gene>
<dbReference type="EC" id="4.3.1.18" evidence="1"/>
<dbReference type="EMBL" id="CP001074">
    <property type="protein sequence ID" value="ACE91014.1"/>
    <property type="molecule type" value="Genomic_DNA"/>
</dbReference>
<dbReference type="SMR" id="B3PYT5"/>
<dbReference type="KEGG" id="rec:RHECIAT_CH0002054"/>
<dbReference type="eggNOG" id="COG3048">
    <property type="taxonomic scope" value="Bacteria"/>
</dbReference>
<dbReference type="HOGENOM" id="CLU_035707_0_0_5"/>
<dbReference type="Proteomes" id="UP000008817">
    <property type="component" value="Chromosome"/>
</dbReference>
<dbReference type="GO" id="GO:0008721">
    <property type="term" value="F:D-serine ammonia-lyase activity"/>
    <property type="evidence" value="ECO:0007669"/>
    <property type="project" value="UniProtKB-EC"/>
</dbReference>
<dbReference type="GO" id="GO:0016836">
    <property type="term" value="F:hydro-lyase activity"/>
    <property type="evidence" value="ECO:0007669"/>
    <property type="project" value="UniProtKB-UniRule"/>
</dbReference>
<dbReference type="GO" id="GO:0030170">
    <property type="term" value="F:pyridoxal phosphate binding"/>
    <property type="evidence" value="ECO:0007669"/>
    <property type="project" value="InterPro"/>
</dbReference>
<dbReference type="GO" id="GO:0036088">
    <property type="term" value="P:D-serine catabolic process"/>
    <property type="evidence" value="ECO:0007669"/>
    <property type="project" value="TreeGrafter"/>
</dbReference>
<dbReference type="GO" id="GO:0009097">
    <property type="term" value="P:isoleucine biosynthetic process"/>
    <property type="evidence" value="ECO:0007669"/>
    <property type="project" value="TreeGrafter"/>
</dbReference>
<dbReference type="Gene3D" id="3.40.50.1100">
    <property type="match status" value="2"/>
</dbReference>
<dbReference type="HAMAP" id="MF_01030">
    <property type="entry name" value="D_Ser_dehydrat"/>
    <property type="match status" value="1"/>
</dbReference>
<dbReference type="InterPro" id="IPR011780">
    <property type="entry name" value="D_Ser_am_lyase"/>
</dbReference>
<dbReference type="InterPro" id="IPR050147">
    <property type="entry name" value="Ser/Thr_Dehydratase"/>
</dbReference>
<dbReference type="InterPro" id="IPR001926">
    <property type="entry name" value="TrpB-like_PALP"/>
</dbReference>
<dbReference type="InterPro" id="IPR036052">
    <property type="entry name" value="TrpB-like_PALP_sf"/>
</dbReference>
<dbReference type="NCBIfam" id="TIGR02035">
    <property type="entry name" value="D_Ser_am_lyase"/>
    <property type="match status" value="1"/>
</dbReference>
<dbReference type="NCBIfam" id="NF002823">
    <property type="entry name" value="PRK02991.1"/>
    <property type="match status" value="1"/>
</dbReference>
<dbReference type="PANTHER" id="PTHR48078:SF9">
    <property type="entry name" value="D-SERINE DEHYDRATASE"/>
    <property type="match status" value="1"/>
</dbReference>
<dbReference type="PANTHER" id="PTHR48078">
    <property type="entry name" value="THREONINE DEHYDRATASE, MITOCHONDRIAL-RELATED"/>
    <property type="match status" value="1"/>
</dbReference>
<dbReference type="Pfam" id="PF00291">
    <property type="entry name" value="PALP"/>
    <property type="match status" value="1"/>
</dbReference>
<dbReference type="SUPFAM" id="SSF53686">
    <property type="entry name" value="Tryptophan synthase beta subunit-like PLP-dependent enzymes"/>
    <property type="match status" value="1"/>
</dbReference>
<sequence length="448" mass="48925">MNTILPSDPARDDVLAGRPTLWLNPSYRKQAIDTSDLPVSPADVASARQNWQRLAPLLAECFPELKDTGGDIRSELVELKELREALGYRTREFGNVFIKADSHLPVAGSIKARGGVYEVFLFADSLARQKGVLVDGEDIRKLATEEARSLFSGYTVAVGSTGNLGLSVGIAARALGFKATVHMSSDAKAWKVERLRKLGVDVIQHEADYTTAVENARDIADADPTIYFVDDEQSRHLFLGYSAAASELASQLDERGITIDEENPLFLYLPCGIGGAPGGVAFGAKAIFGDNVHAFFVEPVQSPCALVHMMSGKQELVSVYDVGLTNKTEADGMAVARMSAFVAKVMREMLAGVYTAADDDLFKLLRMAWITQRQKLEPSAAAALLGPDFLLRHKEGRRFQTLNVIEEKMSQATHVLWTTGGSFVPEEQFQHFLDQAESIAAPSDRNDE</sequence>
<feature type="chain" id="PRO_1000149389" description="Probable D-serine dehydratase">
    <location>
        <begin position="1"/>
        <end position="448"/>
    </location>
</feature>
<feature type="modified residue" description="N6-(pyridoxal phosphate)lysine" evidence="1">
    <location>
        <position position="111"/>
    </location>
</feature>
<proteinExistence type="inferred from homology"/>
<reference key="1">
    <citation type="journal article" date="2010" name="Appl. Environ. Microbiol.">
        <title>Conserved symbiotic plasmid DNA sequences in the multireplicon pangenomic structure of Rhizobium etli.</title>
        <authorList>
            <person name="Gonzalez V."/>
            <person name="Acosta J.L."/>
            <person name="Santamaria R.I."/>
            <person name="Bustos P."/>
            <person name="Fernandez J.L."/>
            <person name="Hernandez Gonzalez I.L."/>
            <person name="Diaz R."/>
            <person name="Flores M."/>
            <person name="Palacios R."/>
            <person name="Mora J."/>
            <person name="Davila G."/>
        </authorList>
    </citation>
    <scope>NUCLEOTIDE SEQUENCE [LARGE SCALE GENOMIC DNA]</scope>
    <source>
        <strain>CIAT 652</strain>
    </source>
</reference>